<keyword id="KW-0378">Hydrolase</keyword>
<keyword id="KW-0511">Multifunctional enzyme</keyword>
<keyword id="KW-0658">Purine biosynthesis</keyword>
<keyword id="KW-1185">Reference proteome</keyword>
<keyword id="KW-0808">Transferase</keyword>
<gene>
    <name evidence="1" type="primary">purH</name>
    <name type="ordered locus">Psyc_1472</name>
</gene>
<dbReference type="EC" id="2.1.2.3" evidence="1"/>
<dbReference type="EC" id="3.5.4.10" evidence="1"/>
<dbReference type="EMBL" id="CP000082">
    <property type="protein sequence ID" value="AAZ19320.1"/>
    <property type="molecule type" value="Genomic_DNA"/>
</dbReference>
<dbReference type="RefSeq" id="WP_011280738.1">
    <property type="nucleotide sequence ID" value="NC_007204.1"/>
</dbReference>
<dbReference type="SMR" id="Q4FRN8"/>
<dbReference type="STRING" id="259536.Psyc_1472"/>
<dbReference type="KEGG" id="par:Psyc_1472"/>
<dbReference type="eggNOG" id="COG0138">
    <property type="taxonomic scope" value="Bacteria"/>
</dbReference>
<dbReference type="HOGENOM" id="CLU_016316_5_2_6"/>
<dbReference type="OrthoDB" id="9802065at2"/>
<dbReference type="UniPathway" id="UPA00074">
    <property type="reaction ID" value="UER00133"/>
</dbReference>
<dbReference type="UniPathway" id="UPA00074">
    <property type="reaction ID" value="UER00135"/>
</dbReference>
<dbReference type="Proteomes" id="UP000000546">
    <property type="component" value="Chromosome"/>
</dbReference>
<dbReference type="GO" id="GO:0005829">
    <property type="term" value="C:cytosol"/>
    <property type="evidence" value="ECO:0007669"/>
    <property type="project" value="TreeGrafter"/>
</dbReference>
<dbReference type="GO" id="GO:0003937">
    <property type="term" value="F:IMP cyclohydrolase activity"/>
    <property type="evidence" value="ECO:0007669"/>
    <property type="project" value="UniProtKB-UniRule"/>
</dbReference>
<dbReference type="GO" id="GO:0004643">
    <property type="term" value="F:phosphoribosylaminoimidazolecarboxamide formyltransferase activity"/>
    <property type="evidence" value="ECO:0007669"/>
    <property type="project" value="UniProtKB-UniRule"/>
</dbReference>
<dbReference type="GO" id="GO:0006189">
    <property type="term" value="P:'de novo' IMP biosynthetic process"/>
    <property type="evidence" value="ECO:0007669"/>
    <property type="project" value="UniProtKB-UniRule"/>
</dbReference>
<dbReference type="CDD" id="cd01421">
    <property type="entry name" value="IMPCH"/>
    <property type="match status" value="1"/>
</dbReference>
<dbReference type="FunFam" id="3.40.140.20:FF:000001">
    <property type="entry name" value="Bifunctional purine biosynthesis protein PurH"/>
    <property type="match status" value="1"/>
</dbReference>
<dbReference type="FunFam" id="3.40.140.20:FF:000002">
    <property type="entry name" value="Bifunctional purine biosynthesis protein PurH"/>
    <property type="match status" value="1"/>
</dbReference>
<dbReference type="FunFam" id="3.40.50.1380:FF:000001">
    <property type="entry name" value="Bifunctional purine biosynthesis protein PurH"/>
    <property type="match status" value="1"/>
</dbReference>
<dbReference type="Gene3D" id="3.40.140.20">
    <property type="match status" value="2"/>
</dbReference>
<dbReference type="Gene3D" id="3.40.50.1380">
    <property type="entry name" value="Methylglyoxal synthase-like domain"/>
    <property type="match status" value="1"/>
</dbReference>
<dbReference type="HAMAP" id="MF_00139">
    <property type="entry name" value="PurH"/>
    <property type="match status" value="1"/>
</dbReference>
<dbReference type="InterPro" id="IPR024051">
    <property type="entry name" value="AICAR_Tfase_dup_dom_sf"/>
</dbReference>
<dbReference type="InterPro" id="IPR016193">
    <property type="entry name" value="Cytidine_deaminase-like"/>
</dbReference>
<dbReference type="InterPro" id="IPR011607">
    <property type="entry name" value="MGS-like_dom"/>
</dbReference>
<dbReference type="InterPro" id="IPR036914">
    <property type="entry name" value="MGS-like_dom_sf"/>
</dbReference>
<dbReference type="InterPro" id="IPR002695">
    <property type="entry name" value="PurH-like"/>
</dbReference>
<dbReference type="NCBIfam" id="NF002049">
    <property type="entry name" value="PRK00881.1"/>
    <property type="match status" value="1"/>
</dbReference>
<dbReference type="NCBIfam" id="TIGR00355">
    <property type="entry name" value="purH"/>
    <property type="match status" value="1"/>
</dbReference>
<dbReference type="PANTHER" id="PTHR11692:SF0">
    <property type="entry name" value="BIFUNCTIONAL PURINE BIOSYNTHESIS PROTEIN ATIC"/>
    <property type="match status" value="1"/>
</dbReference>
<dbReference type="PANTHER" id="PTHR11692">
    <property type="entry name" value="BIFUNCTIONAL PURINE BIOSYNTHESIS PROTEIN PURH"/>
    <property type="match status" value="1"/>
</dbReference>
<dbReference type="Pfam" id="PF01808">
    <property type="entry name" value="AICARFT_IMPCHas"/>
    <property type="match status" value="1"/>
</dbReference>
<dbReference type="Pfam" id="PF02142">
    <property type="entry name" value="MGS"/>
    <property type="match status" value="1"/>
</dbReference>
<dbReference type="PIRSF" id="PIRSF000414">
    <property type="entry name" value="AICARFT_IMPCHas"/>
    <property type="match status" value="1"/>
</dbReference>
<dbReference type="SMART" id="SM00798">
    <property type="entry name" value="AICARFT_IMPCHas"/>
    <property type="match status" value="1"/>
</dbReference>
<dbReference type="SMART" id="SM00851">
    <property type="entry name" value="MGS"/>
    <property type="match status" value="1"/>
</dbReference>
<dbReference type="SUPFAM" id="SSF53927">
    <property type="entry name" value="Cytidine deaminase-like"/>
    <property type="match status" value="1"/>
</dbReference>
<dbReference type="SUPFAM" id="SSF52335">
    <property type="entry name" value="Methylglyoxal synthase-like"/>
    <property type="match status" value="1"/>
</dbReference>
<dbReference type="PROSITE" id="PS51855">
    <property type="entry name" value="MGS"/>
    <property type="match status" value="1"/>
</dbReference>
<reference key="1">
    <citation type="journal article" date="2010" name="Appl. Environ. Microbiol.">
        <title>The genome sequence of Psychrobacter arcticus 273-4, a psychroactive Siberian permafrost bacterium, reveals mechanisms for adaptation to low-temperature growth.</title>
        <authorList>
            <person name="Ayala-del-Rio H.L."/>
            <person name="Chain P.S."/>
            <person name="Grzymski J.J."/>
            <person name="Ponder M.A."/>
            <person name="Ivanova N."/>
            <person name="Bergholz P.W."/>
            <person name="Di Bartolo G."/>
            <person name="Hauser L."/>
            <person name="Land M."/>
            <person name="Bakermans C."/>
            <person name="Rodrigues D."/>
            <person name="Klappenbach J."/>
            <person name="Zarka D."/>
            <person name="Larimer F."/>
            <person name="Richardson P."/>
            <person name="Murray A."/>
            <person name="Thomashow M."/>
            <person name="Tiedje J.M."/>
        </authorList>
    </citation>
    <scope>NUCLEOTIDE SEQUENCE [LARGE SCALE GENOMIC DNA]</scope>
    <source>
        <strain>DSM 17307 / VKM B-2377 / 273-4</strain>
    </source>
</reference>
<protein>
    <recommendedName>
        <fullName evidence="1">Bifunctional purine biosynthesis protein PurH</fullName>
    </recommendedName>
    <domain>
        <recommendedName>
            <fullName evidence="1">Phosphoribosylaminoimidazolecarboxamide formyltransferase</fullName>
            <ecNumber evidence="1">2.1.2.3</ecNumber>
        </recommendedName>
        <alternativeName>
            <fullName evidence="1">AICAR transformylase</fullName>
        </alternativeName>
    </domain>
    <domain>
        <recommendedName>
            <fullName evidence="1">IMP cyclohydrolase</fullName>
            <ecNumber evidence="1">3.5.4.10</ecNumber>
        </recommendedName>
        <alternativeName>
            <fullName evidence="1">ATIC</fullName>
        </alternativeName>
        <alternativeName>
            <fullName evidence="1">IMP synthase</fullName>
        </alternativeName>
        <alternativeName>
            <fullName evidence="1">Inosinicase</fullName>
        </alternativeName>
    </domain>
</protein>
<feature type="chain" id="PRO_1000057906" description="Bifunctional purine biosynthesis protein PurH">
    <location>
        <begin position="1"/>
        <end position="526"/>
    </location>
</feature>
<feature type="domain" description="MGS-like" evidence="2">
    <location>
        <begin position="1"/>
        <end position="145"/>
    </location>
</feature>
<accession>Q4FRN8</accession>
<evidence type="ECO:0000255" key="1">
    <source>
        <dbReference type="HAMAP-Rule" id="MF_00139"/>
    </source>
</evidence>
<evidence type="ECO:0000255" key="2">
    <source>
        <dbReference type="PROSITE-ProRule" id="PRU01202"/>
    </source>
</evidence>
<comment type="catalytic activity">
    <reaction evidence="1">
        <text>(6R)-10-formyltetrahydrofolate + 5-amino-1-(5-phospho-beta-D-ribosyl)imidazole-4-carboxamide = 5-formamido-1-(5-phospho-D-ribosyl)imidazole-4-carboxamide + (6S)-5,6,7,8-tetrahydrofolate</text>
        <dbReference type="Rhea" id="RHEA:22192"/>
        <dbReference type="ChEBI" id="CHEBI:57453"/>
        <dbReference type="ChEBI" id="CHEBI:58467"/>
        <dbReference type="ChEBI" id="CHEBI:58475"/>
        <dbReference type="ChEBI" id="CHEBI:195366"/>
        <dbReference type="EC" id="2.1.2.3"/>
    </reaction>
</comment>
<comment type="catalytic activity">
    <reaction evidence="1">
        <text>IMP + H2O = 5-formamido-1-(5-phospho-D-ribosyl)imidazole-4-carboxamide</text>
        <dbReference type="Rhea" id="RHEA:18445"/>
        <dbReference type="ChEBI" id="CHEBI:15377"/>
        <dbReference type="ChEBI" id="CHEBI:58053"/>
        <dbReference type="ChEBI" id="CHEBI:58467"/>
        <dbReference type="EC" id="3.5.4.10"/>
    </reaction>
</comment>
<comment type="pathway">
    <text evidence="1">Purine metabolism; IMP biosynthesis via de novo pathway; 5-formamido-1-(5-phospho-D-ribosyl)imidazole-4-carboxamide from 5-amino-1-(5-phospho-D-ribosyl)imidazole-4-carboxamide (10-formyl THF route): step 1/1.</text>
</comment>
<comment type="pathway">
    <text evidence="1">Purine metabolism; IMP biosynthesis via de novo pathway; IMP from 5-formamido-1-(5-phospho-D-ribosyl)imidazole-4-carboxamide: step 1/1.</text>
</comment>
<comment type="domain">
    <text evidence="1">The IMP cyclohydrolase activity resides in the N-terminal region.</text>
</comment>
<comment type="similarity">
    <text evidence="1">Belongs to the PurH family.</text>
</comment>
<name>PUR9_PSYA2</name>
<sequence length="526" mass="56508">MSKAPLALLSVSDKSNIVEFAQGLIQAGFGLLSTGGTFRLLTEHNVAVTEVSDYTGFPEMMDGRVKTLHPKIHGGILGRRGTDDMVMSEHAIERIDLVVVNLYPFAETIARSDVTMNDAIENIDIGGPTMVRSAAKNHAHVGIVTDPADYTRVLEALGDSTALTATLRYDLAVKAFEHTAQYDGMIANFLGSRVNESQEPESFSRTFNVQLEKVQDLRYGENPHQKAAFYVENNSSKSKQASIATAKQLQGKALSYNNIADTDAALECVKAFSTPACVIVKHANPCGVAVDIDQVAAYRTAFSTDPESSFGGIIAFNRPLTLAAATAIIDNQFVEVIIAPSVEDGVLEATASKKNVRVLVCGDLPAPELRDRQLDYKRVNGGLLVQEQDLGLITAHDLKIVTDVQPTEAQIADLLFSWNVAKYVKSNAIVYAKGQRTIGVGAGQMSRVNSARIAAIKAEHAGLATEGAVMASDAFFPFRDGIDNAAEVGIAAIIQPGGSMRDDETIAAANEHGIAMVFTGMRHFRH</sequence>
<organism>
    <name type="scientific">Psychrobacter arcticus (strain DSM 17307 / VKM B-2377 / 273-4)</name>
    <dbReference type="NCBI Taxonomy" id="259536"/>
    <lineage>
        <taxon>Bacteria</taxon>
        <taxon>Pseudomonadati</taxon>
        <taxon>Pseudomonadota</taxon>
        <taxon>Gammaproteobacteria</taxon>
        <taxon>Moraxellales</taxon>
        <taxon>Moraxellaceae</taxon>
        <taxon>Psychrobacter</taxon>
    </lineage>
</organism>
<proteinExistence type="inferred from homology"/>